<evidence type="ECO:0000255" key="1">
    <source>
        <dbReference type="HAMAP-Rule" id="MF_00361"/>
    </source>
</evidence>
<keyword id="KW-0067">ATP-binding</keyword>
<keyword id="KW-0963">Cytoplasm</keyword>
<keyword id="KW-0418">Kinase</keyword>
<keyword id="KW-0520">NAD</keyword>
<keyword id="KW-0521">NADP</keyword>
<keyword id="KW-0547">Nucleotide-binding</keyword>
<keyword id="KW-1185">Reference proteome</keyword>
<keyword id="KW-0808">Transferase</keyword>
<gene>
    <name evidence="1" type="primary">nadK</name>
    <name type="ordered locus">EUBELI_01082</name>
</gene>
<name>NADK_LACE2</name>
<reference key="1">
    <citation type="journal article" date="2009" name="Proc. Natl. Acad. Sci. U.S.A.">
        <title>Characterizing a model human gut microbiota composed of members of its two dominant bacterial phyla.</title>
        <authorList>
            <person name="Mahowald M.A."/>
            <person name="Rey F.E."/>
            <person name="Seedorf H."/>
            <person name="Turnbaugh P.J."/>
            <person name="Fulton R.S."/>
            <person name="Wollam A."/>
            <person name="Shah N."/>
            <person name="Wang C."/>
            <person name="Magrini V."/>
            <person name="Wilson R.K."/>
            <person name="Cantarel B.L."/>
            <person name="Coutinho P.M."/>
            <person name="Henrissat B."/>
            <person name="Crock L.W."/>
            <person name="Russell A."/>
            <person name="Verberkmoes N.C."/>
            <person name="Hettich R.L."/>
            <person name="Gordon J.I."/>
        </authorList>
    </citation>
    <scope>NUCLEOTIDE SEQUENCE [LARGE SCALE GENOMIC DNA]</scope>
    <source>
        <strain>ATCC 27750 / DSM 3376 / VPI C15-48 / C15-B4</strain>
    </source>
</reference>
<comment type="function">
    <text evidence="1">Involved in the regulation of the intracellular balance of NAD and NADP, and is a key enzyme in the biosynthesis of NADP. Catalyzes specifically the phosphorylation on 2'-hydroxyl of the adenosine moiety of NAD to yield NADP.</text>
</comment>
<comment type="catalytic activity">
    <reaction evidence="1">
        <text>NAD(+) + ATP = ADP + NADP(+) + H(+)</text>
        <dbReference type="Rhea" id="RHEA:18629"/>
        <dbReference type="ChEBI" id="CHEBI:15378"/>
        <dbReference type="ChEBI" id="CHEBI:30616"/>
        <dbReference type="ChEBI" id="CHEBI:57540"/>
        <dbReference type="ChEBI" id="CHEBI:58349"/>
        <dbReference type="ChEBI" id="CHEBI:456216"/>
        <dbReference type="EC" id="2.7.1.23"/>
    </reaction>
</comment>
<comment type="cofactor">
    <cofactor evidence="1">
        <name>a divalent metal cation</name>
        <dbReference type="ChEBI" id="CHEBI:60240"/>
    </cofactor>
</comment>
<comment type="subcellular location">
    <subcellularLocation>
        <location evidence="1">Cytoplasm</location>
    </subcellularLocation>
</comment>
<comment type="similarity">
    <text evidence="1">Belongs to the NAD kinase family.</text>
</comment>
<dbReference type="EC" id="2.7.1.23" evidence="1"/>
<dbReference type="EMBL" id="CP001104">
    <property type="protein sequence ID" value="ACR72082.1"/>
    <property type="molecule type" value="Genomic_DNA"/>
</dbReference>
<dbReference type="RefSeq" id="WP_012739317.1">
    <property type="nucleotide sequence ID" value="NC_012778.1"/>
</dbReference>
<dbReference type="SMR" id="C4Z0G9"/>
<dbReference type="STRING" id="515620.EUBELI_01082"/>
<dbReference type="GeneID" id="41355809"/>
<dbReference type="KEGG" id="eel:EUBELI_01082"/>
<dbReference type="eggNOG" id="COG0061">
    <property type="taxonomic scope" value="Bacteria"/>
</dbReference>
<dbReference type="HOGENOM" id="CLU_008831_0_0_9"/>
<dbReference type="Proteomes" id="UP000001476">
    <property type="component" value="Chromosome"/>
</dbReference>
<dbReference type="GO" id="GO:0005737">
    <property type="term" value="C:cytoplasm"/>
    <property type="evidence" value="ECO:0007669"/>
    <property type="project" value="UniProtKB-SubCell"/>
</dbReference>
<dbReference type="GO" id="GO:0005524">
    <property type="term" value="F:ATP binding"/>
    <property type="evidence" value="ECO:0007669"/>
    <property type="project" value="UniProtKB-KW"/>
</dbReference>
<dbReference type="GO" id="GO:0046872">
    <property type="term" value="F:metal ion binding"/>
    <property type="evidence" value="ECO:0007669"/>
    <property type="project" value="UniProtKB-UniRule"/>
</dbReference>
<dbReference type="GO" id="GO:0051287">
    <property type="term" value="F:NAD binding"/>
    <property type="evidence" value="ECO:0007669"/>
    <property type="project" value="UniProtKB-ARBA"/>
</dbReference>
<dbReference type="GO" id="GO:0003951">
    <property type="term" value="F:NAD+ kinase activity"/>
    <property type="evidence" value="ECO:0007669"/>
    <property type="project" value="UniProtKB-UniRule"/>
</dbReference>
<dbReference type="GO" id="GO:0019674">
    <property type="term" value="P:NAD metabolic process"/>
    <property type="evidence" value="ECO:0007669"/>
    <property type="project" value="InterPro"/>
</dbReference>
<dbReference type="GO" id="GO:0006741">
    <property type="term" value="P:NADP biosynthetic process"/>
    <property type="evidence" value="ECO:0007669"/>
    <property type="project" value="UniProtKB-UniRule"/>
</dbReference>
<dbReference type="Gene3D" id="3.40.50.10330">
    <property type="entry name" value="Probable inorganic polyphosphate/atp-NAD kinase, domain 1"/>
    <property type="match status" value="1"/>
</dbReference>
<dbReference type="Gene3D" id="2.60.200.30">
    <property type="entry name" value="Probable inorganic polyphosphate/atp-NAD kinase, domain 2"/>
    <property type="match status" value="1"/>
</dbReference>
<dbReference type="HAMAP" id="MF_00361">
    <property type="entry name" value="NAD_kinase"/>
    <property type="match status" value="1"/>
</dbReference>
<dbReference type="InterPro" id="IPR017438">
    <property type="entry name" value="ATP-NAD_kinase_N"/>
</dbReference>
<dbReference type="InterPro" id="IPR017437">
    <property type="entry name" value="ATP-NAD_kinase_PpnK-typ_C"/>
</dbReference>
<dbReference type="InterPro" id="IPR016064">
    <property type="entry name" value="NAD/diacylglycerol_kinase_sf"/>
</dbReference>
<dbReference type="InterPro" id="IPR002504">
    <property type="entry name" value="NADK"/>
</dbReference>
<dbReference type="PANTHER" id="PTHR20275">
    <property type="entry name" value="NAD KINASE"/>
    <property type="match status" value="1"/>
</dbReference>
<dbReference type="PANTHER" id="PTHR20275:SF0">
    <property type="entry name" value="NAD KINASE"/>
    <property type="match status" value="1"/>
</dbReference>
<dbReference type="Pfam" id="PF01513">
    <property type="entry name" value="NAD_kinase"/>
    <property type="match status" value="1"/>
</dbReference>
<dbReference type="Pfam" id="PF20143">
    <property type="entry name" value="NAD_kinase_C"/>
    <property type="match status" value="1"/>
</dbReference>
<dbReference type="SUPFAM" id="SSF111331">
    <property type="entry name" value="NAD kinase/diacylglycerol kinase-like"/>
    <property type="match status" value="1"/>
</dbReference>
<sequence>MKYFYIVTNRFKDPDGVNTRKIAHFLRSKGAECVCQIEQEKAFNKTGSYSDVRLVPNNTECVIVLGGDGTLIQASRELSEKDIPFIGVNIGTLGYLTDTDMSSFEETLESLLRDDYEIDRRMMLDGCIYRGEERIFSDMALNDVVINRNGALRIIDFDIYVNGEYLNTYSADGVIVSTATGSTAYSLSAGGPIIQPTARLIMVTPICPHSLNQRSIIFAADDEIMIEMKDNKSSSGRMTGSLKNDSARVATFDGESFCEVVTGDRIVITQSERISRFVKTSRISFLERIRNKM</sequence>
<feature type="chain" id="PRO_1000205415" description="NAD kinase">
    <location>
        <begin position="1"/>
        <end position="293"/>
    </location>
</feature>
<feature type="active site" description="Proton acceptor" evidence="1">
    <location>
        <position position="68"/>
    </location>
</feature>
<feature type="binding site" evidence="1">
    <location>
        <begin position="68"/>
        <end position="69"/>
    </location>
    <ligand>
        <name>NAD(+)</name>
        <dbReference type="ChEBI" id="CHEBI:57540"/>
    </ligand>
</feature>
<feature type="binding site" evidence="1">
    <location>
        <begin position="142"/>
        <end position="143"/>
    </location>
    <ligand>
        <name>NAD(+)</name>
        <dbReference type="ChEBI" id="CHEBI:57540"/>
    </ligand>
</feature>
<feature type="binding site" evidence="1">
    <location>
        <position position="153"/>
    </location>
    <ligand>
        <name>NAD(+)</name>
        <dbReference type="ChEBI" id="CHEBI:57540"/>
    </ligand>
</feature>
<feature type="binding site" evidence="1">
    <location>
        <position position="172"/>
    </location>
    <ligand>
        <name>NAD(+)</name>
        <dbReference type="ChEBI" id="CHEBI:57540"/>
    </ligand>
</feature>
<feature type="binding site" evidence="1">
    <location>
        <begin position="183"/>
        <end position="188"/>
    </location>
    <ligand>
        <name>NAD(+)</name>
        <dbReference type="ChEBI" id="CHEBI:57540"/>
    </ligand>
</feature>
<protein>
    <recommendedName>
        <fullName evidence="1">NAD kinase</fullName>
        <ecNumber evidence="1">2.7.1.23</ecNumber>
    </recommendedName>
    <alternativeName>
        <fullName evidence="1">ATP-dependent NAD kinase</fullName>
    </alternativeName>
</protein>
<accession>C4Z0G9</accession>
<proteinExistence type="inferred from homology"/>
<organism>
    <name type="scientific">Lachnospira eligens (strain ATCC 27750 / DSM 3376 / VPI C15-48 / C15-B4)</name>
    <name type="common">Eubacterium eligens</name>
    <dbReference type="NCBI Taxonomy" id="515620"/>
    <lineage>
        <taxon>Bacteria</taxon>
        <taxon>Bacillati</taxon>
        <taxon>Bacillota</taxon>
        <taxon>Clostridia</taxon>
        <taxon>Lachnospirales</taxon>
        <taxon>Lachnospiraceae</taxon>
        <taxon>Lachnospira</taxon>
    </lineage>
</organism>